<proteinExistence type="inferred from homology"/>
<feature type="chain" id="PRO_0000163562" description="Large ribosomal subunit protein bL19">
    <location>
        <begin position="1"/>
        <end position="115"/>
    </location>
</feature>
<evidence type="ECO:0000255" key="1">
    <source>
        <dbReference type="HAMAP-Rule" id="MF_00402"/>
    </source>
</evidence>
<evidence type="ECO:0000305" key="2"/>
<sequence length="115" mass="13095">MHALDALDALSIKADIPDFSPGDTVRVYVNITEGDRSRVQVFQGVVIARRGFGVRQTFTVRKISFQVGVERIFPLHSPSINRIEVVTKGSVRRAKLYYIRKLRGKKAKVKQKREL</sequence>
<protein>
    <recommendedName>
        <fullName evidence="1">Large ribosomal subunit protein bL19</fullName>
    </recommendedName>
    <alternativeName>
        <fullName evidence="2">50S ribosomal protein L19</fullName>
    </alternativeName>
</protein>
<gene>
    <name evidence="1" type="primary">rplS</name>
    <name type="ordered locus">TW308</name>
</gene>
<reference key="1">
    <citation type="journal article" date="2003" name="Lancet">
        <title>Sequencing and analysis of the genome of the Whipple's disease bacterium Tropheryma whipplei.</title>
        <authorList>
            <person name="Bentley S.D."/>
            <person name="Maiwald M."/>
            <person name="Murphy L.D."/>
            <person name="Pallen M.J."/>
            <person name="Yeats C.A."/>
            <person name="Dover L.G."/>
            <person name="Norbertczak H.T."/>
            <person name="Besra G.S."/>
            <person name="Quail M.A."/>
            <person name="Harris D.E."/>
            <person name="von Herbay A."/>
            <person name="Goble A."/>
            <person name="Rutter S."/>
            <person name="Squares R."/>
            <person name="Squares S."/>
            <person name="Barrell B.G."/>
            <person name="Parkhill J."/>
            <person name="Relman D.A."/>
        </authorList>
    </citation>
    <scope>NUCLEOTIDE SEQUENCE [LARGE SCALE GENOMIC DNA]</scope>
    <source>
        <strain>TW08/27</strain>
    </source>
</reference>
<accession>Q83I04</accession>
<comment type="function">
    <text evidence="1">This protein is located at the 30S-50S ribosomal subunit interface and may play a role in the structure and function of the aminoacyl-tRNA binding site.</text>
</comment>
<comment type="similarity">
    <text evidence="1">Belongs to the bacterial ribosomal protein bL19 family.</text>
</comment>
<organism>
    <name type="scientific">Tropheryma whipplei (strain TW08/27)</name>
    <name type="common">Whipple's bacillus</name>
    <dbReference type="NCBI Taxonomy" id="218496"/>
    <lineage>
        <taxon>Bacteria</taxon>
        <taxon>Bacillati</taxon>
        <taxon>Actinomycetota</taxon>
        <taxon>Actinomycetes</taxon>
        <taxon>Micrococcales</taxon>
        <taxon>Tropherymataceae</taxon>
        <taxon>Tropheryma</taxon>
    </lineage>
</organism>
<name>RL19_TROW8</name>
<dbReference type="EMBL" id="BX251411">
    <property type="protein sequence ID" value="CAD66982.1"/>
    <property type="molecule type" value="Genomic_DNA"/>
</dbReference>
<dbReference type="RefSeq" id="WP_011096262.1">
    <property type="nucleotide sequence ID" value="NC_004551.1"/>
</dbReference>
<dbReference type="SMR" id="Q83I04"/>
<dbReference type="GeneID" id="67388084"/>
<dbReference type="KEGG" id="tws:TW308"/>
<dbReference type="HOGENOM" id="CLU_103507_2_2_11"/>
<dbReference type="GO" id="GO:0022625">
    <property type="term" value="C:cytosolic large ribosomal subunit"/>
    <property type="evidence" value="ECO:0007669"/>
    <property type="project" value="TreeGrafter"/>
</dbReference>
<dbReference type="GO" id="GO:0003735">
    <property type="term" value="F:structural constituent of ribosome"/>
    <property type="evidence" value="ECO:0007669"/>
    <property type="project" value="InterPro"/>
</dbReference>
<dbReference type="GO" id="GO:0006412">
    <property type="term" value="P:translation"/>
    <property type="evidence" value="ECO:0007669"/>
    <property type="project" value="UniProtKB-UniRule"/>
</dbReference>
<dbReference type="FunFam" id="2.30.30.790:FF:000001">
    <property type="entry name" value="50S ribosomal protein L19"/>
    <property type="match status" value="1"/>
</dbReference>
<dbReference type="Gene3D" id="2.30.30.790">
    <property type="match status" value="1"/>
</dbReference>
<dbReference type="HAMAP" id="MF_00402">
    <property type="entry name" value="Ribosomal_bL19"/>
    <property type="match status" value="1"/>
</dbReference>
<dbReference type="InterPro" id="IPR001857">
    <property type="entry name" value="Ribosomal_bL19"/>
</dbReference>
<dbReference type="InterPro" id="IPR018257">
    <property type="entry name" value="Ribosomal_bL19_CS"/>
</dbReference>
<dbReference type="InterPro" id="IPR038657">
    <property type="entry name" value="Ribosomal_bL19_sf"/>
</dbReference>
<dbReference type="InterPro" id="IPR008991">
    <property type="entry name" value="Translation_prot_SH3-like_sf"/>
</dbReference>
<dbReference type="NCBIfam" id="TIGR01024">
    <property type="entry name" value="rplS_bact"/>
    <property type="match status" value="1"/>
</dbReference>
<dbReference type="PANTHER" id="PTHR15680:SF9">
    <property type="entry name" value="LARGE RIBOSOMAL SUBUNIT PROTEIN BL19M"/>
    <property type="match status" value="1"/>
</dbReference>
<dbReference type="PANTHER" id="PTHR15680">
    <property type="entry name" value="RIBOSOMAL PROTEIN L19"/>
    <property type="match status" value="1"/>
</dbReference>
<dbReference type="Pfam" id="PF01245">
    <property type="entry name" value="Ribosomal_L19"/>
    <property type="match status" value="1"/>
</dbReference>
<dbReference type="PIRSF" id="PIRSF002191">
    <property type="entry name" value="Ribosomal_L19"/>
    <property type="match status" value="1"/>
</dbReference>
<dbReference type="PRINTS" id="PR00061">
    <property type="entry name" value="RIBOSOMALL19"/>
</dbReference>
<dbReference type="SUPFAM" id="SSF50104">
    <property type="entry name" value="Translation proteins SH3-like domain"/>
    <property type="match status" value="1"/>
</dbReference>
<dbReference type="PROSITE" id="PS01015">
    <property type="entry name" value="RIBOSOMAL_L19"/>
    <property type="match status" value="1"/>
</dbReference>
<keyword id="KW-0687">Ribonucleoprotein</keyword>
<keyword id="KW-0689">Ribosomal protein</keyword>